<feature type="chain" id="PRO_1000116126" description="Aspartate carbamoyltransferase catalytic subunit">
    <location>
        <begin position="1"/>
        <end position="320"/>
    </location>
</feature>
<feature type="binding site" evidence="1">
    <location>
        <position position="53"/>
    </location>
    <ligand>
        <name>carbamoyl phosphate</name>
        <dbReference type="ChEBI" id="CHEBI:58228"/>
    </ligand>
</feature>
<feature type="binding site" evidence="1">
    <location>
        <position position="54"/>
    </location>
    <ligand>
        <name>carbamoyl phosphate</name>
        <dbReference type="ChEBI" id="CHEBI:58228"/>
    </ligand>
</feature>
<feature type="binding site" evidence="1">
    <location>
        <position position="82"/>
    </location>
    <ligand>
        <name>L-aspartate</name>
        <dbReference type="ChEBI" id="CHEBI:29991"/>
    </ligand>
</feature>
<feature type="binding site" evidence="1">
    <location>
        <position position="103"/>
    </location>
    <ligand>
        <name>carbamoyl phosphate</name>
        <dbReference type="ChEBI" id="CHEBI:58228"/>
    </ligand>
</feature>
<feature type="binding site" evidence="1">
    <location>
        <position position="131"/>
    </location>
    <ligand>
        <name>carbamoyl phosphate</name>
        <dbReference type="ChEBI" id="CHEBI:58228"/>
    </ligand>
</feature>
<feature type="binding site" evidence="1">
    <location>
        <position position="134"/>
    </location>
    <ligand>
        <name>carbamoyl phosphate</name>
        <dbReference type="ChEBI" id="CHEBI:58228"/>
    </ligand>
</feature>
<feature type="binding site" evidence="1">
    <location>
        <position position="164"/>
    </location>
    <ligand>
        <name>L-aspartate</name>
        <dbReference type="ChEBI" id="CHEBI:29991"/>
    </ligand>
</feature>
<feature type="binding site" evidence="1">
    <location>
        <position position="227"/>
    </location>
    <ligand>
        <name>L-aspartate</name>
        <dbReference type="ChEBI" id="CHEBI:29991"/>
    </ligand>
</feature>
<feature type="binding site" evidence="1">
    <location>
        <position position="266"/>
    </location>
    <ligand>
        <name>carbamoyl phosphate</name>
        <dbReference type="ChEBI" id="CHEBI:58228"/>
    </ligand>
</feature>
<feature type="binding site" evidence="1">
    <location>
        <position position="267"/>
    </location>
    <ligand>
        <name>carbamoyl phosphate</name>
        <dbReference type="ChEBI" id="CHEBI:58228"/>
    </ligand>
</feature>
<protein>
    <recommendedName>
        <fullName evidence="1">Aspartate carbamoyltransferase catalytic subunit</fullName>
        <ecNumber evidence="1">2.1.3.2</ecNumber>
    </recommendedName>
    <alternativeName>
        <fullName evidence="1">Aspartate transcarbamylase</fullName>
        <shortName evidence="1">ATCase</shortName>
    </alternativeName>
</protein>
<evidence type="ECO:0000255" key="1">
    <source>
        <dbReference type="HAMAP-Rule" id="MF_00001"/>
    </source>
</evidence>
<reference key="1">
    <citation type="journal article" date="2008" name="Proc. Natl. Acad. Sci. U.S.A.">
        <title>The genome sequence of Bifidobacterium longum subsp. infantis reveals adaptations for milk utilization within the infant microbiome.</title>
        <authorList>
            <person name="Sela D.A."/>
            <person name="Chapman J."/>
            <person name="Adeuya A."/>
            <person name="Kim J.H."/>
            <person name="Chen F."/>
            <person name="Whitehead T.R."/>
            <person name="Lapidus A."/>
            <person name="Rokhsar D.S."/>
            <person name="Lebrilla C.B."/>
            <person name="German J.B."/>
            <person name="Price N.P."/>
            <person name="Richardson P.M."/>
            <person name="Mills D.A."/>
        </authorList>
    </citation>
    <scope>NUCLEOTIDE SEQUENCE [LARGE SCALE GENOMIC DNA]</scope>
    <source>
        <strain>ATCC 15697 / DSM 20088 / JCM 1222 / NCTC 11817 / S12</strain>
    </source>
</reference>
<reference key="2">
    <citation type="journal article" date="2011" name="Nature">
        <title>Bifidobacteria can protect from enteropathogenic infection through production of acetate.</title>
        <authorList>
            <person name="Fukuda S."/>
            <person name="Toh H."/>
            <person name="Hase K."/>
            <person name="Oshima K."/>
            <person name="Nakanishi Y."/>
            <person name="Yoshimura K."/>
            <person name="Tobe T."/>
            <person name="Clarke J.M."/>
            <person name="Topping D.L."/>
            <person name="Suzuki T."/>
            <person name="Taylor T.D."/>
            <person name="Itoh K."/>
            <person name="Kikuchi J."/>
            <person name="Morita H."/>
            <person name="Hattori M."/>
            <person name="Ohno H."/>
        </authorList>
    </citation>
    <scope>NUCLEOTIDE SEQUENCE [LARGE SCALE GENOMIC DNA]</scope>
    <source>
        <strain>ATCC 15697 / DSM 20088 / JCM 1222 / NCTC 11817 / S12</strain>
    </source>
</reference>
<name>PYRB_BIFLS</name>
<proteinExistence type="inferred from homology"/>
<comment type="function">
    <text evidence="1">Catalyzes the condensation of carbamoyl phosphate and aspartate to form carbamoyl aspartate and inorganic phosphate, the committed step in the de novo pyrimidine nucleotide biosynthesis pathway.</text>
</comment>
<comment type="catalytic activity">
    <reaction evidence="1">
        <text>carbamoyl phosphate + L-aspartate = N-carbamoyl-L-aspartate + phosphate + H(+)</text>
        <dbReference type="Rhea" id="RHEA:20013"/>
        <dbReference type="ChEBI" id="CHEBI:15378"/>
        <dbReference type="ChEBI" id="CHEBI:29991"/>
        <dbReference type="ChEBI" id="CHEBI:32814"/>
        <dbReference type="ChEBI" id="CHEBI:43474"/>
        <dbReference type="ChEBI" id="CHEBI:58228"/>
        <dbReference type="EC" id="2.1.3.2"/>
    </reaction>
</comment>
<comment type="pathway">
    <text evidence="1">Pyrimidine metabolism; UMP biosynthesis via de novo pathway; (S)-dihydroorotate from bicarbonate: step 2/3.</text>
</comment>
<comment type="subunit">
    <text evidence="1">Heterododecamer (2C3:3R2) of six catalytic PyrB chains organized as two trimers (C3), and six regulatory PyrI chains organized as three dimers (R2).</text>
</comment>
<comment type="similarity">
    <text evidence="1">Belongs to the aspartate/ornithine carbamoyltransferase superfamily. ATCase family.</text>
</comment>
<accession>B7GRV4</accession>
<accession>E8MKK3</accession>
<gene>
    <name evidence="1" type="primary">pyrB</name>
    <name type="ordered locus">Blon_1451</name>
    <name type="ordered locus">BLIJ_1497</name>
</gene>
<sequence>MVGKSVVTLDGLSTNQILDLLHKAEYIDSHRKEVAHTCDGRVLATLFYEPSTRTRLSFETAMLRLGGKVIGFAGAQLASVTKGESIADTLKTVSNYVDVVAIRHPKEGAALVASRAASVPVINAGDGGHMHPTQTLADLATLQSRFGRITDLTVGLCGDLTFGRTVHSLIETLCRFGNVRFVLISPDELKTPQYVIDRINATDNCSYVEVRDLASVIGDLDVLYMTRVQKERFFNEDDYLRLRDTYILDEEKLQLAKPSMAVLHPLPRVNEIAVDVDDDPRAAYFEQVKNGMLVRMALESTVVGDELPGYEPLNSKEVHA</sequence>
<organism>
    <name type="scientific">Bifidobacterium longum subsp. infantis (strain ATCC 15697 / DSM 20088 / JCM 1222 / NCTC 11817 / S12)</name>
    <dbReference type="NCBI Taxonomy" id="391904"/>
    <lineage>
        <taxon>Bacteria</taxon>
        <taxon>Bacillati</taxon>
        <taxon>Actinomycetota</taxon>
        <taxon>Actinomycetes</taxon>
        <taxon>Bifidobacteriales</taxon>
        <taxon>Bifidobacteriaceae</taxon>
        <taxon>Bifidobacterium</taxon>
    </lineage>
</organism>
<keyword id="KW-0665">Pyrimidine biosynthesis</keyword>
<keyword id="KW-0808">Transferase</keyword>
<dbReference type="EC" id="2.1.3.2" evidence="1"/>
<dbReference type="EMBL" id="CP001095">
    <property type="protein sequence ID" value="ACJ52534.1"/>
    <property type="molecule type" value="Genomic_DNA"/>
</dbReference>
<dbReference type="EMBL" id="AP010889">
    <property type="protein sequence ID" value="BAJ69080.1"/>
    <property type="molecule type" value="Genomic_DNA"/>
</dbReference>
<dbReference type="RefSeq" id="WP_012577773.1">
    <property type="nucleotide sequence ID" value="NC_011593.1"/>
</dbReference>
<dbReference type="SMR" id="B7GRV4"/>
<dbReference type="KEGG" id="bln:Blon_1451"/>
<dbReference type="KEGG" id="blon:BLIJ_1497"/>
<dbReference type="PATRIC" id="fig|391904.8.peg.1510"/>
<dbReference type="HOGENOM" id="CLU_043846_1_2_11"/>
<dbReference type="UniPathway" id="UPA00070">
    <property type="reaction ID" value="UER00116"/>
</dbReference>
<dbReference type="Proteomes" id="UP000001360">
    <property type="component" value="Chromosome"/>
</dbReference>
<dbReference type="GO" id="GO:0016597">
    <property type="term" value="F:amino acid binding"/>
    <property type="evidence" value="ECO:0007669"/>
    <property type="project" value="InterPro"/>
</dbReference>
<dbReference type="GO" id="GO:0004070">
    <property type="term" value="F:aspartate carbamoyltransferase activity"/>
    <property type="evidence" value="ECO:0007669"/>
    <property type="project" value="UniProtKB-UniRule"/>
</dbReference>
<dbReference type="GO" id="GO:0006207">
    <property type="term" value="P:'de novo' pyrimidine nucleobase biosynthetic process"/>
    <property type="evidence" value="ECO:0007669"/>
    <property type="project" value="InterPro"/>
</dbReference>
<dbReference type="GO" id="GO:0044205">
    <property type="term" value="P:'de novo' UMP biosynthetic process"/>
    <property type="evidence" value="ECO:0007669"/>
    <property type="project" value="UniProtKB-UniRule"/>
</dbReference>
<dbReference type="GO" id="GO:0006520">
    <property type="term" value="P:amino acid metabolic process"/>
    <property type="evidence" value="ECO:0007669"/>
    <property type="project" value="InterPro"/>
</dbReference>
<dbReference type="FunFam" id="3.40.50.1370:FF:000002">
    <property type="entry name" value="Aspartate carbamoyltransferase 2"/>
    <property type="match status" value="1"/>
</dbReference>
<dbReference type="Gene3D" id="3.40.50.1370">
    <property type="entry name" value="Aspartate/ornithine carbamoyltransferase"/>
    <property type="match status" value="2"/>
</dbReference>
<dbReference type="HAMAP" id="MF_00001">
    <property type="entry name" value="Asp_carb_tr"/>
    <property type="match status" value="1"/>
</dbReference>
<dbReference type="InterPro" id="IPR006132">
    <property type="entry name" value="Asp/Orn_carbamoyltranf_P-bd"/>
</dbReference>
<dbReference type="InterPro" id="IPR006130">
    <property type="entry name" value="Asp/Orn_carbamoylTrfase"/>
</dbReference>
<dbReference type="InterPro" id="IPR036901">
    <property type="entry name" value="Asp/Orn_carbamoylTrfase_sf"/>
</dbReference>
<dbReference type="InterPro" id="IPR002082">
    <property type="entry name" value="Asp_carbamoyltransf"/>
</dbReference>
<dbReference type="InterPro" id="IPR006131">
    <property type="entry name" value="Asp_carbamoyltransf_Asp/Orn-bd"/>
</dbReference>
<dbReference type="NCBIfam" id="TIGR00670">
    <property type="entry name" value="asp_carb_tr"/>
    <property type="match status" value="1"/>
</dbReference>
<dbReference type="NCBIfam" id="NF002032">
    <property type="entry name" value="PRK00856.1"/>
    <property type="match status" value="1"/>
</dbReference>
<dbReference type="PANTHER" id="PTHR45753:SF6">
    <property type="entry name" value="ASPARTATE CARBAMOYLTRANSFERASE"/>
    <property type="match status" value="1"/>
</dbReference>
<dbReference type="PANTHER" id="PTHR45753">
    <property type="entry name" value="ORNITHINE CARBAMOYLTRANSFERASE, MITOCHONDRIAL"/>
    <property type="match status" value="1"/>
</dbReference>
<dbReference type="Pfam" id="PF00185">
    <property type="entry name" value="OTCace"/>
    <property type="match status" value="1"/>
</dbReference>
<dbReference type="Pfam" id="PF02729">
    <property type="entry name" value="OTCace_N"/>
    <property type="match status" value="1"/>
</dbReference>
<dbReference type="PRINTS" id="PR00100">
    <property type="entry name" value="AOTCASE"/>
</dbReference>
<dbReference type="PRINTS" id="PR00101">
    <property type="entry name" value="ATCASE"/>
</dbReference>
<dbReference type="SUPFAM" id="SSF53671">
    <property type="entry name" value="Aspartate/ornithine carbamoyltransferase"/>
    <property type="match status" value="1"/>
</dbReference>
<dbReference type="PROSITE" id="PS00097">
    <property type="entry name" value="CARBAMOYLTRANSFERASE"/>
    <property type="match status" value="1"/>
</dbReference>